<comment type="function">
    <text evidence="1">Prenyltransferase that mediates the formation of menaquinone-4 (MK-4) and coenzyme Q10. MK-4 is a vitamin K2 isoform required for endothelial cell development. Mediates the conversion of phylloquinone (PK) into MK-4, probably by cleaving the side chain of phylloquinone (PK) to release 2-methyl-1,4-naphthoquinone (menadione; K3) and then prenylating it with geranylgeranyl pyrophosphate (GGPP) to form MK-4. Also plays a role in cardiovascular development independently of MK-4 biosynthesis, by acting as a coenzyme Q10 biosynthetic enzyme: coenzyme Q10, also named ubiquinone, plays an important antioxidant role in the cardiovascular system. Mediates biosynthesis of coenzyme Q10 in the Golgi membrane, leading to protect cardiovascular tissues from NOS3/eNOS-dependent oxidative stress.</text>
</comment>
<comment type="catalytic activity">
    <reaction evidence="1">
        <text>menadiol + (2E,6E,10E)-geranylgeranyl diphosphate = menaquinol-4 + diphosphate</text>
        <dbReference type="Rhea" id="RHEA:74083"/>
        <dbReference type="ChEBI" id="CHEBI:6746"/>
        <dbReference type="ChEBI" id="CHEBI:33019"/>
        <dbReference type="ChEBI" id="CHEBI:58756"/>
        <dbReference type="ChEBI" id="CHEBI:193091"/>
    </reaction>
    <physiologicalReaction direction="left-to-right" evidence="1">
        <dbReference type="Rhea" id="RHEA:74084"/>
    </physiologicalReaction>
</comment>
<comment type="catalytic activity">
    <reaction evidence="1">
        <text>all-trans-decaprenyl diphosphate + 4-hydroxybenzoate = 4-hydroxy-3-(all-trans-decaprenyl)benzoate + diphosphate</text>
        <dbReference type="Rhea" id="RHEA:44564"/>
        <dbReference type="ChEBI" id="CHEBI:17879"/>
        <dbReference type="ChEBI" id="CHEBI:33019"/>
        <dbReference type="ChEBI" id="CHEBI:60721"/>
        <dbReference type="ChEBI" id="CHEBI:84503"/>
        <dbReference type="EC" id="2.5.1.39"/>
    </reaction>
    <physiologicalReaction direction="left-to-right" evidence="1">
        <dbReference type="Rhea" id="RHEA:44565"/>
    </physiologicalReaction>
</comment>
<comment type="pathway">
    <text evidence="1">Quinol/quinone metabolism; menaquinone biosynthesis.</text>
</comment>
<comment type="pathway">
    <text evidence="1">Cofactor biosynthesis; ubiquinone biosynthesis.</text>
</comment>
<comment type="subcellular location">
    <subcellularLocation>
        <location evidence="1">Endoplasmic reticulum membrane</location>
        <topology evidence="2">Multi-pass membrane protein</topology>
    </subcellularLocation>
    <subcellularLocation>
        <location evidence="1">Golgi apparatus membrane</location>
        <topology evidence="2">Multi-pass membrane protein</topology>
    </subcellularLocation>
    <subcellularLocation>
        <location evidence="1">Mitochondrion membrane</location>
        <topology evidence="2">Multi-pass membrane protein</topology>
    </subcellularLocation>
</comment>
<comment type="similarity">
    <text evidence="3">Belongs to the UbiA prenyltransferase family.</text>
</comment>
<feature type="chain" id="PRO_0000242630" description="UbiA prenyltransferase domain-containing protein 1">
    <location>
        <begin position="1"/>
        <end position="345"/>
    </location>
</feature>
<feature type="transmembrane region" description="Helical" evidence="2">
    <location>
        <begin position="60"/>
        <end position="80"/>
    </location>
</feature>
<feature type="transmembrane region" description="Helical" evidence="2">
    <location>
        <begin position="90"/>
        <end position="110"/>
    </location>
</feature>
<feature type="transmembrane region" description="Helical" evidence="2">
    <location>
        <begin position="141"/>
        <end position="161"/>
    </location>
</feature>
<feature type="transmembrane region" description="Helical" evidence="2">
    <location>
        <begin position="169"/>
        <end position="189"/>
    </location>
</feature>
<feature type="transmembrane region" description="Helical" evidence="2">
    <location>
        <begin position="213"/>
        <end position="233"/>
    </location>
</feature>
<feature type="transmembrane region" description="Helical" evidence="2">
    <location>
        <begin position="251"/>
        <end position="273"/>
    </location>
</feature>
<feature type="transmembrane region" description="Helical" evidence="2">
    <location>
        <begin position="285"/>
        <end position="305"/>
    </location>
</feature>
<feature type="transmembrane region" description="Helical" evidence="2">
    <location>
        <begin position="324"/>
        <end position="344"/>
    </location>
</feature>
<feature type="sequence conflict" description="In Ref. 2; AAI67573." evidence="3" ref="2">
    <original>G</original>
    <variation>E</variation>
    <location>
        <position position="85"/>
    </location>
</feature>
<sequence>MKPDDCLNNIHIETENLDEVDLTKLTGEAHSLSNGIVPPFTDKTFRKATSFKQKCATYVLALRPWSFSASLIPVALGTAIAYRSGGSLDLLLFVVCAVAVLAVHGAGNLVNTYYDFSKGIDHKKSDDRTLVDHILEPQDVVRFGVFLYTLGCLCAACLYFISKLKLEHLALIYFGGLSSSFLYTGGIGFKYVALGDLVILITFGPLAVMFAHAVQVGYLAVTPLLYAVPLALSTEAILHSNNTRDMESDRQAGIVTLAILVGPMFSYMLYNLLVFLPYLIFSILATRYTISMALPLLTIPLAFSLERQFRSQNFNKIPQRTAKLNLLVGLFYVFGIVLAPAGSLP</sequence>
<organism>
    <name type="scientific">Xenopus tropicalis</name>
    <name type="common">Western clawed frog</name>
    <name type="synonym">Silurana tropicalis</name>
    <dbReference type="NCBI Taxonomy" id="8364"/>
    <lineage>
        <taxon>Eukaryota</taxon>
        <taxon>Metazoa</taxon>
        <taxon>Chordata</taxon>
        <taxon>Craniata</taxon>
        <taxon>Vertebrata</taxon>
        <taxon>Euteleostomi</taxon>
        <taxon>Amphibia</taxon>
        <taxon>Batrachia</taxon>
        <taxon>Anura</taxon>
        <taxon>Pipoidea</taxon>
        <taxon>Pipidae</taxon>
        <taxon>Xenopodinae</taxon>
        <taxon>Xenopus</taxon>
        <taxon>Silurana</taxon>
    </lineage>
</organism>
<evidence type="ECO:0000250" key="1">
    <source>
        <dbReference type="UniProtKB" id="Q9Y5Z9"/>
    </source>
</evidence>
<evidence type="ECO:0000255" key="2"/>
<evidence type="ECO:0000305" key="3"/>
<name>UBIA1_XENTR</name>
<gene>
    <name type="primary">ubiad1</name>
    <name type="ORF">TTpA003i03.1</name>
</gene>
<dbReference type="EC" id="2.5.1.-" evidence="1"/>
<dbReference type="EC" id="2.5.1.39" evidence="1"/>
<dbReference type="EMBL" id="CR760773">
    <property type="protein sequence ID" value="CAJ82974.1"/>
    <property type="molecule type" value="mRNA"/>
</dbReference>
<dbReference type="EMBL" id="BC167573">
    <property type="protein sequence ID" value="AAI67573.1"/>
    <property type="molecule type" value="mRNA"/>
</dbReference>
<dbReference type="EMBL" id="BC170591">
    <property type="protein sequence ID" value="AAI70591.1"/>
    <property type="molecule type" value="mRNA"/>
</dbReference>
<dbReference type="EMBL" id="BC170593">
    <property type="protein sequence ID" value="AAI70593.1"/>
    <property type="molecule type" value="mRNA"/>
</dbReference>
<dbReference type="RefSeq" id="NP_001016538.1">
    <property type="nucleotide sequence ID" value="NM_001016538.2"/>
</dbReference>
<dbReference type="RefSeq" id="XP_012822063.1">
    <property type="nucleotide sequence ID" value="XM_012966609.1"/>
</dbReference>
<dbReference type="RefSeq" id="XP_017950881.1">
    <property type="nucleotide sequence ID" value="XM_018095392.1"/>
</dbReference>
<dbReference type="SMR" id="Q28HR4"/>
<dbReference type="FunCoup" id="Q28HR4">
    <property type="interactions" value="2682"/>
</dbReference>
<dbReference type="STRING" id="8364.ENSXETP00000010455"/>
<dbReference type="GeneID" id="549292"/>
<dbReference type="KEGG" id="xtr:549292"/>
<dbReference type="AGR" id="Xenbase:XB-GENE-963273"/>
<dbReference type="CTD" id="29914"/>
<dbReference type="Xenbase" id="XB-GENE-963273">
    <property type="gene designation" value="ubiad1"/>
</dbReference>
<dbReference type="InParanoid" id="Q28HR4"/>
<dbReference type="OrthoDB" id="203513at2759"/>
<dbReference type="Reactome" id="R-XTR-6806664">
    <property type="pathway name" value="Metabolism of vitamin K"/>
</dbReference>
<dbReference type="UniPathway" id="UPA00079"/>
<dbReference type="UniPathway" id="UPA00232"/>
<dbReference type="Proteomes" id="UP000008143">
    <property type="component" value="Chromosome 7"/>
</dbReference>
<dbReference type="GO" id="GO:0005783">
    <property type="term" value="C:endoplasmic reticulum"/>
    <property type="evidence" value="ECO:0000250"/>
    <property type="project" value="UniProtKB"/>
</dbReference>
<dbReference type="GO" id="GO:0005789">
    <property type="term" value="C:endoplasmic reticulum membrane"/>
    <property type="evidence" value="ECO:0007669"/>
    <property type="project" value="UniProtKB-SubCell"/>
</dbReference>
<dbReference type="GO" id="GO:0000139">
    <property type="term" value="C:Golgi membrane"/>
    <property type="evidence" value="ECO:0000250"/>
    <property type="project" value="UniProtKB"/>
</dbReference>
<dbReference type="GO" id="GO:0031966">
    <property type="term" value="C:mitochondrial membrane"/>
    <property type="evidence" value="ECO:0007669"/>
    <property type="project" value="UniProtKB-SubCell"/>
</dbReference>
<dbReference type="GO" id="GO:0016209">
    <property type="term" value="F:antioxidant activity"/>
    <property type="evidence" value="ECO:0000250"/>
    <property type="project" value="UniProtKB"/>
</dbReference>
<dbReference type="GO" id="GO:0004659">
    <property type="term" value="F:prenyltransferase activity"/>
    <property type="evidence" value="ECO:0000250"/>
    <property type="project" value="UniProtKB"/>
</dbReference>
<dbReference type="GO" id="GO:0072359">
    <property type="term" value="P:circulatory system development"/>
    <property type="evidence" value="ECO:0000250"/>
    <property type="project" value="UniProtKB"/>
</dbReference>
<dbReference type="GO" id="GO:0001885">
    <property type="term" value="P:endothelial cell development"/>
    <property type="evidence" value="ECO:0000250"/>
    <property type="project" value="UniProtKB"/>
</dbReference>
<dbReference type="GO" id="GO:0009234">
    <property type="term" value="P:menaquinone biosynthetic process"/>
    <property type="evidence" value="ECO:0000250"/>
    <property type="project" value="UniProtKB"/>
</dbReference>
<dbReference type="GO" id="GO:0006744">
    <property type="term" value="P:ubiquinone biosynthetic process"/>
    <property type="evidence" value="ECO:0000250"/>
    <property type="project" value="UniProtKB"/>
</dbReference>
<dbReference type="GO" id="GO:0042371">
    <property type="term" value="P:vitamin K biosynthetic process"/>
    <property type="evidence" value="ECO:0000250"/>
    <property type="project" value="UniProtKB"/>
</dbReference>
<dbReference type="CDD" id="cd13962">
    <property type="entry name" value="PT_UbiA_UBIAD1"/>
    <property type="match status" value="1"/>
</dbReference>
<dbReference type="FunFam" id="1.10.357.140:FF:000005">
    <property type="entry name" value="UbiA prenyltransferase domain-containing protein 1"/>
    <property type="match status" value="1"/>
</dbReference>
<dbReference type="Gene3D" id="1.10.357.140">
    <property type="entry name" value="UbiA prenyltransferase"/>
    <property type="match status" value="1"/>
</dbReference>
<dbReference type="Gene3D" id="1.20.120.1780">
    <property type="entry name" value="UbiA prenyltransferase"/>
    <property type="match status" value="1"/>
</dbReference>
<dbReference type="InterPro" id="IPR000537">
    <property type="entry name" value="UbiA_prenyltransferase"/>
</dbReference>
<dbReference type="InterPro" id="IPR044878">
    <property type="entry name" value="UbiA_sf"/>
</dbReference>
<dbReference type="InterPro" id="IPR026046">
    <property type="entry name" value="UBIAD1"/>
</dbReference>
<dbReference type="PANTHER" id="PTHR13929">
    <property type="entry name" value="1,4-DIHYDROXY-2-NAPHTHOATE OCTAPRENYLTRANSFERASE"/>
    <property type="match status" value="1"/>
</dbReference>
<dbReference type="PANTHER" id="PTHR13929:SF0">
    <property type="entry name" value="UBIA PRENYLTRANSFERASE DOMAIN-CONTAINING PROTEIN 1"/>
    <property type="match status" value="1"/>
</dbReference>
<dbReference type="Pfam" id="PF01040">
    <property type="entry name" value="UbiA"/>
    <property type="match status" value="1"/>
</dbReference>
<dbReference type="PIRSF" id="PIRSF005355">
    <property type="entry name" value="UBIAD1"/>
    <property type="match status" value="1"/>
</dbReference>
<accession>Q28HR4</accession>
<accession>B3DLT5</accession>
<accession>B7ZSP1</accession>
<proteinExistence type="evidence at transcript level"/>
<keyword id="KW-0256">Endoplasmic reticulum</keyword>
<keyword id="KW-0333">Golgi apparatus</keyword>
<keyword id="KW-0472">Membrane</keyword>
<keyword id="KW-0474">Menaquinone biosynthesis</keyword>
<keyword id="KW-0496">Mitochondrion</keyword>
<keyword id="KW-0637">Prenyltransferase</keyword>
<keyword id="KW-1185">Reference proteome</keyword>
<keyword id="KW-0808">Transferase</keyword>
<keyword id="KW-0812">Transmembrane</keyword>
<keyword id="KW-1133">Transmembrane helix</keyword>
<keyword id="KW-0831">Ubiquinone biosynthesis</keyword>
<protein>
    <recommendedName>
        <fullName>UbiA prenyltransferase domain-containing protein 1</fullName>
        <ecNumber evidence="1">2.5.1.-</ecNumber>
        <ecNumber evidence="1">2.5.1.39</ecNumber>
    </recommendedName>
</protein>
<reference key="1">
    <citation type="submission" date="2006-03" db="EMBL/GenBank/DDBJ databases">
        <authorList>
            <consortium name="Sanger Xenopus tropicalis EST/cDNA project"/>
            <consortium name="NIH - Xenopus Gene Collection (XGC) project"/>
        </authorList>
    </citation>
    <scope>NUCLEOTIDE SEQUENCE [LARGE SCALE MRNA]</scope>
    <source>
        <tissue>Tadpole</tissue>
    </source>
</reference>
<reference key="2">
    <citation type="submission" date="2008-06" db="EMBL/GenBank/DDBJ databases">
        <authorList>
            <consortium name="NIH - Xenopus Gene Collection (XGC) project"/>
        </authorList>
    </citation>
    <scope>NUCLEOTIDE SEQUENCE [LARGE SCALE MRNA]</scope>
    <source>
        <tissue>Brain</tissue>
        <tissue>Neurula</tissue>
    </source>
</reference>